<comment type="function">
    <text evidence="1">Binds voltage-independently to sodium channels (Nav) and shifts the voltage of activation toward more negative potentials (By similarity). This toxin is active against mammals and also affects neuromuscular preparations of frog.</text>
</comment>
<comment type="subcellular location">
    <subcellularLocation>
        <location>Secreted</location>
    </subcellularLocation>
</comment>
<comment type="tissue specificity">
    <text>Expressed by the venom gland.</text>
</comment>
<comment type="domain">
    <text evidence="3">Has the structural arrangement of an alpha-helix connected to antiparallel beta-sheets by disulfide bonds (CS-alpha/beta).</text>
</comment>
<comment type="similarity">
    <text evidence="3">Belongs to the long (4 C-C) scorpion toxin superfamily. Sodium channel inhibitor family. Beta subfamily.</text>
</comment>
<keyword id="KW-0903">Direct protein sequencing</keyword>
<keyword id="KW-0872">Ion channel impairing toxin</keyword>
<keyword id="KW-0528">Neurotoxin</keyword>
<keyword id="KW-0964">Secreted</keyword>
<keyword id="KW-0800">Toxin</keyword>
<keyword id="KW-0738">Voltage-gated sodium channel impairing toxin</keyword>
<protein>
    <recommendedName>
        <fullName>Toxin TdII-3</fullName>
    </recommendedName>
</protein>
<dbReference type="SMR" id="P60262"/>
<dbReference type="GO" id="GO:0005576">
    <property type="term" value="C:extracellular region"/>
    <property type="evidence" value="ECO:0007669"/>
    <property type="project" value="UniProtKB-SubCell"/>
</dbReference>
<dbReference type="GO" id="GO:0008200">
    <property type="term" value="F:ion channel inhibitor activity"/>
    <property type="evidence" value="ECO:0007669"/>
    <property type="project" value="InterPro"/>
</dbReference>
<dbReference type="GO" id="GO:0017080">
    <property type="term" value="F:sodium channel regulator activity"/>
    <property type="evidence" value="ECO:0007669"/>
    <property type="project" value="UniProtKB-KW"/>
</dbReference>
<dbReference type="GO" id="GO:0090729">
    <property type="term" value="F:toxin activity"/>
    <property type="evidence" value="ECO:0007669"/>
    <property type="project" value="UniProtKB-KW"/>
</dbReference>
<dbReference type="Gene3D" id="3.30.30.10">
    <property type="entry name" value="Knottin, scorpion toxin-like"/>
    <property type="match status" value="1"/>
</dbReference>
<dbReference type="InterPro" id="IPR044062">
    <property type="entry name" value="LCN-type_CS_alpha_beta_dom"/>
</dbReference>
<dbReference type="InterPro" id="IPR036574">
    <property type="entry name" value="Scorpion_toxin-like_sf"/>
</dbReference>
<dbReference type="SUPFAM" id="SSF57095">
    <property type="entry name" value="Scorpion toxin-like"/>
    <property type="match status" value="1"/>
</dbReference>
<dbReference type="PROSITE" id="PS51863">
    <property type="entry name" value="LCN_CSAB"/>
    <property type="match status" value="1"/>
</dbReference>
<proteinExistence type="evidence at protein level"/>
<evidence type="ECO:0000250" key="1"/>
<evidence type="ECO:0000255" key="2">
    <source>
        <dbReference type="PROSITE-ProRule" id="PRU01210"/>
    </source>
</evidence>
<evidence type="ECO:0000305" key="3"/>
<organism>
    <name type="scientific">Tityus discrepans</name>
    <name type="common">Venezuelan scorpion</name>
    <dbReference type="NCBI Taxonomy" id="57059"/>
    <lineage>
        <taxon>Eukaryota</taxon>
        <taxon>Metazoa</taxon>
        <taxon>Ecdysozoa</taxon>
        <taxon>Arthropoda</taxon>
        <taxon>Chelicerata</taxon>
        <taxon>Arachnida</taxon>
        <taxon>Scorpiones</taxon>
        <taxon>Buthida</taxon>
        <taxon>Buthoidea</taxon>
        <taxon>Buthidae</taxon>
        <taxon>Tityus</taxon>
    </lineage>
</organism>
<accession>P60262</accession>
<sequence>KDGYLVGTDGCKYGCFTRPGHFCANEECL</sequence>
<name>SCX23_TITDI</name>
<reference key="1">
    <citation type="journal article" date="1996" name="Toxicon">
        <title>High performance liquid chromatography purification and amino acid sequence of toxins from the muscarinic fraction of Tityus discrepans scorpion venom.</title>
        <authorList>
            <person name="D'Suze G."/>
            <person name="Corona F."/>
            <person name="Possani L.D."/>
            <person name="Sevcik C."/>
        </authorList>
    </citation>
    <scope>PROTEIN SEQUENCE</scope>
    <source>
        <tissue>Venom</tissue>
    </source>
</reference>
<feature type="chain" id="PRO_0000066822" description="Toxin TdII-3">
    <location>
        <begin position="1"/>
        <end position="29" status="greater than"/>
    </location>
</feature>
<feature type="domain" description="LCN-type CS-alpha/beta" evidence="2">
    <location>
        <begin position="1"/>
        <end position="29" status="greater than"/>
    </location>
</feature>
<feature type="non-terminal residue">
    <location>
        <position position="29"/>
    </location>
</feature>